<gene>
    <name evidence="1" type="primary">queC</name>
    <name type="ordered locus">BAbS19_I18510</name>
</gene>
<feature type="chain" id="PRO_1000186562" description="7-cyano-7-deazaguanine synthase">
    <location>
        <begin position="1"/>
        <end position="232"/>
    </location>
</feature>
<feature type="binding site" evidence="1">
    <location>
        <begin position="7"/>
        <end position="17"/>
    </location>
    <ligand>
        <name>ATP</name>
        <dbReference type="ChEBI" id="CHEBI:30616"/>
    </ligand>
</feature>
<feature type="binding site" evidence="1">
    <location>
        <position position="185"/>
    </location>
    <ligand>
        <name>Zn(2+)</name>
        <dbReference type="ChEBI" id="CHEBI:29105"/>
    </ligand>
</feature>
<feature type="binding site" evidence="1">
    <location>
        <position position="193"/>
    </location>
    <ligand>
        <name>Zn(2+)</name>
        <dbReference type="ChEBI" id="CHEBI:29105"/>
    </ligand>
</feature>
<feature type="binding site" evidence="1">
    <location>
        <position position="196"/>
    </location>
    <ligand>
        <name>Zn(2+)</name>
        <dbReference type="ChEBI" id="CHEBI:29105"/>
    </ligand>
</feature>
<feature type="binding site" evidence="1">
    <location>
        <position position="199"/>
    </location>
    <ligand>
        <name>Zn(2+)</name>
        <dbReference type="ChEBI" id="CHEBI:29105"/>
    </ligand>
</feature>
<name>QUEC_BRUA1</name>
<sequence>MKTLVICSGGLDSVSLAHKMAAEHELTGLLSFDYGQRHKKELDFAQACAKRLGVPHQIIDIRTIGASLTGSALTDDVDVPDGHYAEETMKVTVVPNRNAIMLAIAFGVAAAQKADAVALAVHGGDHFIYPDCRPGFIEAFQTMQKHALDGYADVKLLAPYVHATKADIVADGAKYRTPFEATWSCYKGADRHCGRCGTCVERREAFHLAGIDDPTSYEDADFWRATTQKRNA</sequence>
<accession>B2S8M9</accession>
<proteinExistence type="inferred from homology"/>
<dbReference type="EC" id="6.3.4.20" evidence="1"/>
<dbReference type="EMBL" id="CP000887">
    <property type="protein sequence ID" value="ACD73333.1"/>
    <property type="molecule type" value="Genomic_DNA"/>
</dbReference>
<dbReference type="RefSeq" id="WP_002965038.1">
    <property type="nucleotide sequence ID" value="NC_010742.1"/>
</dbReference>
<dbReference type="SMR" id="B2S8M9"/>
<dbReference type="GeneID" id="97534751"/>
<dbReference type="KEGG" id="bmc:BAbS19_I18510"/>
<dbReference type="HOGENOM" id="CLU_081854_1_0_5"/>
<dbReference type="UniPathway" id="UPA00391"/>
<dbReference type="Proteomes" id="UP000002565">
    <property type="component" value="Chromosome 1"/>
</dbReference>
<dbReference type="GO" id="GO:0005524">
    <property type="term" value="F:ATP binding"/>
    <property type="evidence" value="ECO:0007669"/>
    <property type="project" value="UniProtKB-UniRule"/>
</dbReference>
<dbReference type="GO" id="GO:0016879">
    <property type="term" value="F:ligase activity, forming carbon-nitrogen bonds"/>
    <property type="evidence" value="ECO:0007669"/>
    <property type="project" value="UniProtKB-UniRule"/>
</dbReference>
<dbReference type="GO" id="GO:0008270">
    <property type="term" value="F:zinc ion binding"/>
    <property type="evidence" value="ECO:0007669"/>
    <property type="project" value="UniProtKB-UniRule"/>
</dbReference>
<dbReference type="GO" id="GO:0008616">
    <property type="term" value="P:queuosine biosynthetic process"/>
    <property type="evidence" value="ECO:0007669"/>
    <property type="project" value="UniProtKB-UniRule"/>
</dbReference>
<dbReference type="CDD" id="cd01995">
    <property type="entry name" value="QueC-like"/>
    <property type="match status" value="1"/>
</dbReference>
<dbReference type="Gene3D" id="3.40.50.620">
    <property type="entry name" value="HUPs"/>
    <property type="match status" value="1"/>
</dbReference>
<dbReference type="HAMAP" id="MF_01633">
    <property type="entry name" value="QueC"/>
    <property type="match status" value="1"/>
</dbReference>
<dbReference type="InterPro" id="IPR018317">
    <property type="entry name" value="QueC"/>
</dbReference>
<dbReference type="InterPro" id="IPR014729">
    <property type="entry name" value="Rossmann-like_a/b/a_fold"/>
</dbReference>
<dbReference type="NCBIfam" id="TIGR00364">
    <property type="entry name" value="7-cyano-7-deazaguanine synthase QueC"/>
    <property type="match status" value="1"/>
</dbReference>
<dbReference type="PANTHER" id="PTHR42914">
    <property type="entry name" value="7-CYANO-7-DEAZAGUANINE SYNTHASE"/>
    <property type="match status" value="1"/>
</dbReference>
<dbReference type="PANTHER" id="PTHR42914:SF1">
    <property type="entry name" value="7-CYANO-7-DEAZAGUANINE SYNTHASE"/>
    <property type="match status" value="1"/>
</dbReference>
<dbReference type="Pfam" id="PF06508">
    <property type="entry name" value="QueC"/>
    <property type="match status" value="1"/>
</dbReference>
<dbReference type="PIRSF" id="PIRSF006293">
    <property type="entry name" value="ExsB"/>
    <property type="match status" value="1"/>
</dbReference>
<dbReference type="SUPFAM" id="SSF52402">
    <property type="entry name" value="Adenine nucleotide alpha hydrolases-like"/>
    <property type="match status" value="1"/>
</dbReference>
<comment type="function">
    <text evidence="1">Catalyzes the ATP-dependent conversion of 7-carboxy-7-deazaguanine (CDG) to 7-cyano-7-deazaguanine (preQ(0)).</text>
</comment>
<comment type="catalytic activity">
    <reaction evidence="1">
        <text>7-carboxy-7-deazaguanine + NH4(+) + ATP = 7-cyano-7-deazaguanine + ADP + phosphate + H2O + H(+)</text>
        <dbReference type="Rhea" id="RHEA:27982"/>
        <dbReference type="ChEBI" id="CHEBI:15377"/>
        <dbReference type="ChEBI" id="CHEBI:15378"/>
        <dbReference type="ChEBI" id="CHEBI:28938"/>
        <dbReference type="ChEBI" id="CHEBI:30616"/>
        <dbReference type="ChEBI" id="CHEBI:43474"/>
        <dbReference type="ChEBI" id="CHEBI:45075"/>
        <dbReference type="ChEBI" id="CHEBI:61036"/>
        <dbReference type="ChEBI" id="CHEBI:456216"/>
        <dbReference type="EC" id="6.3.4.20"/>
    </reaction>
</comment>
<comment type="cofactor">
    <cofactor evidence="1">
        <name>Zn(2+)</name>
        <dbReference type="ChEBI" id="CHEBI:29105"/>
    </cofactor>
    <text evidence="1">Binds 1 zinc ion per subunit.</text>
</comment>
<comment type="pathway">
    <text evidence="1">Purine metabolism; 7-cyano-7-deazaguanine biosynthesis.</text>
</comment>
<comment type="similarity">
    <text evidence="1">Belongs to the QueC family.</text>
</comment>
<evidence type="ECO:0000255" key="1">
    <source>
        <dbReference type="HAMAP-Rule" id="MF_01633"/>
    </source>
</evidence>
<protein>
    <recommendedName>
        <fullName evidence="1">7-cyano-7-deazaguanine synthase</fullName>
        <ecNumber evidence="1">6.3.4.20</ecNumber>
    </recommendedName>
    <alternativeName>
        <fullName evidence="1">7-cyano-7-carbaguanine synthase</fullName>
    </alternativeName>
    <alternativeName>
        <fullName evidence="1">PreQ(0) synthase</fullName>
    </alternativeName>
    <alternativeName>
        <fullName evidence="1">Queuosine biosynthesis protein QueC</fullName>
    </alternativeName>
</protein>
<keyword id="KW-0067">ATP-binding</keyword>
<keyword id="KW-0436">Ligase</keyword>
<keyword id="KW-0479">Metal-binding</keyword>
<keyword id="KW-0547">Nucleotide-binding</keyword>
<keyword id="KW-0671">Queuosine biosynthesis</keyword>
<keyword id="KW-0862">Zinc</keyword>
<reference key="1">
    <citation type="journal article" date="2008" name="PLoS ONE">
        <title>Genome sequence of Brucella abortus vaccine strain S19 compared to virulent strains yields candidate virulence genes.</title>
        <authorList>
            <person name="Crasta O.R."/>
            <person name="Folkerts O."/>
            <person name="Fei Z."/>
            <person name="Mane S.P."/>
            <person name="Evans C."/>
            <person name="Martino-Catt S."/>
            <person name="Bricker B."/>
            <person name="Yu G."/>
            <person name="Du L."/>
            <person name="Sobral B.W."/>
        </authorList>
    </citation>
    <scope>NUCLEOTIDE SEQUENCE [LARGE SCALE GENOMIC DNA]</scope>
    <source>
        <strain>S19</strain>
    </source>
</reference>
<organism>
    <name type="scientific">Brucella abortus (strain S19)</name>
    <dbReference type="NCBI Taxonomy" id="430066"/>
    <lineage>
        <taxon>Bacteria</taxon>
        <taxon>Pseudomonadati</taxon>
        <taxon>Pseudomonadota</taxon>
        <taxon>Alphaproteobacteria</taxon>
        <taxon>Hyphomicrobiales</taxon>
        <taxon>Brucellaceae</taxon>
        <taxon>Brucella/Ochrobactrum group</taxon>
        <taxon>Brucella</taxon>
    </lineage>
</organism>